<gene>
    <name evidence="1" type="primary">rpsU</name>
    <name type="ordered locus">AnaeK_0755</name>
</gene>
<dbReference type="EMBL" id="CP001131">
    <property type="protein sequence ID" value="ACG71993.1"/>
    <property type="molecule type" value="Genomic_DNA"/>
</dbReference>
<dbReference type="RefSeq" id="WP_012524821.1">
    <property type="nucleotide sequence ID" value="NC_011145.1"/>
</dbReference>
<dbReference type="SMR" id="B4UDK2"/>
<dbReference type="KEGG" id="ank:AnaeK_0755"/>
<dbReference type="HOGENOM" id="CLU_159258_1_2_7"/>
<dbReference type="OrthoDB" id="9799244at2"/>
<dbReference type="Proteomes" id="UP000001871">
    <property type="component" value="Chromosome"/>
</dbReference>
<dbReference type="GO" id="GO:1990904">
    <property type="term" value="C:ribonucleoprotein complex"/>
    <property type="evidence" value="ECO:0007669"/>
    <property type="project" value="UniProtKB-KW"/>
</dbReference>
<dbReference type="GO" id="GO:0005840">
    <property type="term" value="C:ribosome"/>
    <property type="evidence" value="ECO:0007669"/>
    <property type="project" value="UniProtKB-KW"/>
</dbReference>
<dbReference type="GO" id="GO:0003735">
    <property type="term" value="F:structural constituent of ribosome"/>
    <property type="evidence" value="ECO:0007669"/>
    <property type="project" value="InterPro"/>
</dbReference>
<dbReference type="GO" id="GO:0006412">
    <property type="term" value="P:translation"/>
    <property type="evidence" value="ECO:0007669"/>
    <property type="project" value="UniProtKB-UniRule"/>
</dbReference>
<dbReference type="Gene3D" id="1.20.5.1150">
    <property type="entry name" value="Ribosomal protein S8"/>
    <property type="match status" value="1"/>
</dbReference>
<dbReference type="HAMAP" id="MF_00358">
    <property type="entry name" value="Ribosomal_bS21"/>
    <property type="match status" value="1"/>
</dbReference>
<dbReference type="InterPro" id="IPR001911">
    <property type="entry name" value="Ribosomal_bS21"/>
</dbReference>
<dbReference type="InterPro" id="IPR038380">
    <property type="entry name" value="Ribosomal_bS21_sf"/>
</dbReference>
<dbReference type="NCBIfam" id="TIGR00030">
    <property type="entry name" value="S21p"/>
    <property type="match status" value="1"/>
</dbReference>
<dbReference type="PANTHER" id="PTHR21109">
    <property type="entry name" value="MITOCHONDRIAL 28S RIBOSOMAL PROTEIN S21"/>
    <property type="match status" value="1"/>
</dbReference>
<dbReference type="PANTHER" id="PTHR21109:SF22">
    <property type="entry name" value="SMALL RIBOSOMAL SUBUNIT PROTEIN BS21"/>
    <property type="match status" value="1"/>
</dbReference>
<dbReference type="Pfam" id="PF01165">
    <property type="entry name" value="Ribosomal_S21"/>
    <property type="match status" value="1"/>
</dbReference>
<dbReference type="PRINTS" id="PR00976">
    <property type="entry name" value="RIBOSOMALS21"/>
</dbReference>
<reference key="1">
    <citation type="submission" date="2008-08" db="EMBL/GenBank/DDBJ databases">
        <title>Complete sequence of Anaeromyxobacter sp. K.</title>
        <authorList>
            <consortium name="US DOE Joint Genome Institute"/>
            <person name="Lucas S."/>
            <person name="Copeland A."/>
            <person name="Lapidus A."/>
            <person name="Glavina del Rio T."/>
            <person name="Dalin E."/>
            <person name="Tice H."/>
            <person name="Bruce D."/>
            <person name="Goodwin L."/>
            <person name="Pitluck S."/>
            <person name="Saunders E."/>
            <person name="Brettin T."/>
            <person name="Detter J.C."/>
            <person name="Han C."/>
            <person name="Larimer F."/>
            <person name="Land M."/>
            <person name="Hauser L."/>
            <person name="Kyrpides N."/>
            <person name="Ovchinnikiva G."/>
            <person name="Beliaev A."/>
        </authorList>
    </citation>
    <scope>NUCLEOTIDE SEQUENCE [LARGE SCALE GENOMIC DNA]</scope>
    <source>
        <strain>K</strain>
    </source>
</reference>
<organism>
    <name type="scientific">Anaeromyxobacter sp. (strain K)</name>
    <dbReference type="NCBI Taxonomy" id="447217"/>
    <lineage>
        <taxon>Bacteria</taxon>
        <taxon>Pseudomonadati</taxon>
        <taxon>Myxococcota</taxon>
        <taxon>Myxococcia</taxon>
        <taxon>Myxococcales</taxon>
        <taxon>Cystobacterineae</taxon>
        <taxon>Anaeromyxobacteraceae</taxon>
        <taxon>Anaeromyxobacter</taxon>
    </lineage>
</organism>
<accession>B4UDK2</accession>
<protein>
    <recommendedName>
        <fullName evidence="1">Small ribosomal subunit protein bS21</fullName>
    </recommendedName>
    <alternativeName>
        <fullName evidence="2">30S ribosomal protein S21</fullName>
    </alternativeName>
</protein>
<name>RS21_ANASK</name>
<comment type="similarity">
    <text evidence="1">Belongs to the bacterial ribosomal protein bS21 family.</text>
</comment>
<sequence length="64" mass="7510">MTGVRVKDGESFENAMKRFKKQCEKAGILSEIRKREHYEKPSVKRKKKALAAKKRALKKMRKGF</sequence>
<keyword id="KW-0687">Ribonucleoprotein</keyword>
<keyword id="KW-0689">Ribosomal protein</keyword>
<proteinExistence type="inferred from homology"/>
<evidence type="ECO:0000255" key="1">
    <source>
        <dbReference type="HAMAP-Rule" id="MF_00358"/>
    </source>
</evidence>
<evidence type="ECO:0000305" key="2"/>
<feature type="chain" id="PRO_1000120582" description="Small ribosomal subunit protein bS21">
    <location>
        <begin position="1"/>
        <end position="64"/>
    </location>
</feature>